<dbReference type="EC" id="2.7.2.1" evidence="1"/>
<dbReference type="EMBL" id="AE000516">
    <property type="protein sequence ID" value="AAK44646.1"/>
    <property type="molecule type" value="Genomic_DNA"/>
</dbReference>
<dbReference type="PIR" id="G70628">
    <property type="entry name" value="G70628"/>
</dbReference>
<dbReference type="RefSeq" id="WP_003402097.1">
    <property type="nucleotide sequence ID" value="NZ_KK341227.1"/>
</dbReference>
<dbReference type="SMR" id="P9WQH0"/>
<dbReference type="KEGG" id="mtc:MT0422"/>
<dbReference type="PATRIC" id="fig|83331.31.peg.451"/>
<dbReference type="HOGENOM" id="CLU_020352_0_1_11"/>
<dbReference type="UniPathway" id="UPA00340">
    <property type="reaction ID" value="UER00458"/>
</dbReference>
<dbReference type="Proteomes" id="UP000001020">
    <property type="component" value="Chromosome"/>
</dbReference>
<dbReference type="GO" id="GO:0005737">
    <property type="term" value="C:cytoplasm"/>
    <property type="evidence" value="ECO:0007669"/>
    <property type="project" value="UniProtKB-SubCell"/>
</dbReference>
<dbReference type="GO" id="GO:0008776">
    <property type="term" value="F:acetate kinase activity"/>
    <property type="evidence" value="ECO:0007669"/>
    <property type="project" value="UniProtKB-UniRule"/>
</dbReference>
<dbReference type="GO" id="GO:0005524">
    <property type="term" value="F:ATP binding"/>
    <property type="evidence" value="ECO:0007669"/>
    <property type="project" value="UniProtKB-KW"/>
</dbReference>
<dbReference type="GO" id="GO:0000287">
    <property type="term" value="F:magnesium ion binding"/>
    <property type="evidence" value="ECO:0007669"/>
    <property type="project" value="UniProtKB-UniRule"/>
</dbReference>
<dbReference type="GO" id="GO:0006083">
    <property type="term" value="P:acetate metabolic process"/>
    <property type="evidence" value="ECO:0007669"/>
    <property type="project" value="TreeGrafter"/>
</dbReference>
<dbReference type="GO" id="GO:0006085">
    <property type="term" value="P:acetyl-CoA biosynthetic process"/>
    <property type="evidence" value="ECO:0007669"/>
    <property type="project" value="UniProtKB-UniRule"/>
</dbReference>
<dbReference type="CDD" id="cd24010">
    <property type="entry name" value="ASKHA_NBD_AcK_PK"/>
    <property type="match status" value="1"/>
</dbReference>
<dbReference type="Gene3D" id="3.30.420.40">
    <property type="match status" value="2"/>
</dbReference>
<dbReference type="HAMAP" id="MF_00020">
    <property type="entry name" value="Acetate_kinase"/>
    <property type="match status" value="1"/>
</dbReference>
<dbReference type="InterPro" id="IPR004372">
    <property type="entry name" value="Ac/propionate_kinase"/>
</dbReference>
<dbReference type="InterPro" id="IPR000890">
    <property type="entry name" value="Aliphatic_acid_kin_short-chain"/>
</dbReference>
<dbReference type="InterPro" id="IPR023865">
    <property type="entry name" value="Aliphatic_acid_kinase_CS"/>
</dbReference>
<dbReference type="InterPro" id="IPR043129">
    <property type="entry name" value="ATPase_NBD"/>
</dbReference>
<dbReference type="NCBIfam" id="TIGR00016">
    <property type="entry name" value="ackA"/>
    <property type="match status" value="1"/>
</dbReference>
<dbReference type="PANTHER" id="PTHR21060">
    <property type="entry name" value="ACETATE KINASE"/>
    <property type="match status" value="1"/>
</dbReference>
<dbReference type="PANTHER" id="PTHR21060:SF15">
    <property type="entry name" value="ACETATE KINASE-RELATED"/>
    <property type="match status" value="1"/>
</dbReference>
<dbReference type="Pfam" id="PF00871">
    <property type="entry name" value="Acetate_kinase"/>
    <property type="match status" value="1"/>
</dbReference>
<dbReference type="PIRSF" id="PIRSF000722">
    <property type="entry name" value="Acetate_prop_kin"/>
    <property type="match status" value="1"/>
</dbReference>
<dbReference type="PRINTS" id="PR00471">
    <property type="entry name" value="ACETATEKNASE"/>
</dbReference>
<dbReference type="SUPFAM" id="SSF53067">
    <property type="entry name" value="Actin-like ATPase domain"/>
    <property type="match status" value="2"/>
</dbReference>
<dbReference type="PROSITE" id="PS01075">
    <property type="entry name" value="ACETATE_KINASE_1"/>
    <property type="match status" value="1"/>
</dbReference>
<dbReference type="PROSITE" id="PS01076">
    <property type="entry name" value="ACETATE_KINASE_2"/>
    <property type="match status" value="1"/>
</dbReference>
<reference key="1">
    <citation type="journal article" date="2002" name="J. Bacteriol.">
        <title>Whole-genome comparison of Mycobacterium tuberculosis clinical and laboratory strains.</title>
        <authorList>
            <person name="Fleischmann R.D."/>
            <person name="Alland D."/>
            <person name="Eisen J.A."/>
            <person name="Carpenter L."/>
            <person name="White O."/>
            <person name="Peterson J.D."/>
            <person name="DeBoy R.T."/>
            <person name="Dodson R.J."/>
            <person name="Gwinn M.L."/>
            <person name="Haft D.H."/>
            <person name="Hickey E.K."/>
            <person name="Kolonay J.F."/>
            <person name="Nelson W.C."/>
            <person name="Umayam L.A."/>
            <person name="Ermolaeva M.D."/>
            <person name="Salzberg S.L."/>
            <person name="Delcher A."/>
            <person name="Utterback T.R."/>
            <person name="Weidman J.F."/>
            <person name="Khouri H.M."/>
            <person name="Gill J."/>
            <person name="Mikula A."/>
            <person name="Bishai W."/>
            <person name="Jacobs W.R. Jr."/>
            <person name="Venter J.C."/>
            <person name="Fraser C.M."/>
        </authorList>
    </citation>
    <scope>NUCLEOTIDE SEQUENCE [LARGE SCALE GENOMIC DNA]</scope>
    <source>
        <strain>CDC 1551 / Oshkosh</strain>
    </source>
</reference>
<comment type="function">
    <text evidence="1">Catalyzes the formation of acetyl phosphate from acetate and ATP. Can also catalyze the reverse reaction.</text>
</comment>
<comment type="catalytic activity">
    <reaction evidence="1">
        <text>acetate + ATP = acetyl phosphate + ADP</text>
        <dbReference type="Rhea" id="RHEA:11352"/>
        <dbReference type="ChEBI" id="CHEBI:22191"/>
        <dbReference type="ChEBI" id="CHEBI:30089"/>
        <dbReference type="ChEBI" id="CHEBI:30616"/>
        <dbReference type="ChEBI" id="CHEBI:456216"/>
        <dbReference type="EC" id="2.7.2.1"/>
    </reaction>
</comment>
<comment type="cofactor">
    <cofactor evidence="1">
        <name>Mg(2+)</name>
        <dbReference type="ChEBI" id="CHEBI:18420"/>
    </cofactor>
    <cofactor evidence="1">
        <name>Mn(2+)</name>
        <dbReference type="ChEBI" id="CHEBI:29035"/>
    </cofactor>
    <text evidence="1">Mg(2+). Can also accept Mn(2+).</text>
</comment>
<comment type="pathway">
    <text evidence="1">Metabolic intermediate biosynthesis; acetyl-CoA biosynthesis; acetyl-CoA from acetate: step 1/2.</text>
</comment>
<comment type="subunit">
    <text evidence="1">Homodimer.</text>
</comment>
<comment type="subcellular location">
    <subcellularLocation>
        <location evidence="1">Cytoplasm</location>
    </subcellularLocation>
</comment>
<comment type="similarity">
    <text evidence="1">Belongs to the acetokinase family.</text>
</comment>
<organism>
    <name type="scientific">Mycobacterium tuberculosis (strain CDC 1551 / Oshkosh)</name>
    <dbReference type="NCBI Taxonomy" id="83331"/>
    <lineage>
        <taxon>Bacteria</taxon>
        <taxon>Bacillati</taxon>
        <taxon>Actinomycetota</taxon>
        <taxon>Actinomycetes</taxon>
        <taxon>Mycobacteriales</taxon>
        <taxon>Mycobacteriaceae</taxon>
        <taxon>Mycobacterium</taxon>
        <taxon>Mycobacterium tuberculosis complex</taxon>
    </lineage>
</organism>
<proteinExistence type="inferred from homology"/>
<keyword id="KW-0067">ATP-binding</keyword>
<keyword id="KW-0963">Cytoplasm</keyword>
<keyword id="KW-0418">Kinase</keyword>
<keyword id="KW-0460">Magnesium</keyword>
<keyword id="KW-0479">Metal-binding</keyword>
<keyword id="KW-0547">Nucleotide-binding</keyword>
<keyword id="KW-1185">Reference proteome</keyword>
<keyword id="KW-0808">Transferase</keyword>
<sequence length="385" mass="41318">MSSTVLVINSGSSSLKFQLVEPVAGMSRAAGIVERIGERSSPVADHAQALHRAFKMLAEDGIDLQTCGLVAVGHRVVHGGTEFHQPTLLDDTVIGKLEELSALAPLHNPPAVLGIKVARRLLANVAHVAVFDTAFFHDLPPAAATYAIDRDVADRWHIRRYGFHGTSHQYVSERAAAFLGRPLDGLNQIVLHLGNGASASAIARGRPVETSMGLTPLEGLVMGTRSGDLDPGVISYLWRTARMGVEDIESMLNHRSGMLGLAGERDFRRLRLVIETGDRSAQLAYEVFIHRLRKYLGAYLAVLGHTDVVSFTAGIGENDAAVRRDALAGLQGLGIALDQDRNLGPGHGARRISSDDSPIAVLVVPTNEELAIARDCLRVLGGRRA</sequence>
<protein>
    <recommendedName>
        <fullName evidence="1">Acetate kinase</fullName>
        <ecNumber evidence="1">2.7.2.1</ecNumber>
    </recommendedName>
    <alternativeName>
        <fullName evidence="1">Acetokinase</fullName>
    </alternativeName>
</protein>
<evidence type="ECO:0000255" key="1">
    <source>
        <dbReference type="HAMAP-Rule" id="MF_00020"/>
    </source>
</evidence>
<gene>
    <name evidence="1" type="primary">ackA</name>
    <name type="ordered locus">MT0422</name>
</gene>
<name>ACKA_MYCTO</name>
<accession>P9WQH0</accession>
<accession>L0T3G5</accession>
<accession>P63409</accession>
<accession>P96255</accession>
<feature type="chain" id="PRO_0000426780" description="Acetate kinase">
    <location>
        <begin position="1"/>
        <end position="385"/>
    </location>
</feature>
<feature type="active site" description="Proton donor/acceptor" evidence="1">
    <location>
        <position position="132"/>
    </location>
</feature>
<feature type="binding site" evidence="1">
    <location>
        <position position="9"/>
    </location>
    <ligand>
        <name>Mg(2+)</name>
        <dbReference type="ChEBI" id="CHEBI:18420"/>
    </ligand>
</feature>
<feature type="binding site" evidence="1">
    <location>
        <position position="16"/>
    </location>
    <ligand>
        <name>ATP</name>
        <dbReference type="ChEBI" id="CHEBI:30616"/>
    </ligand>
</feature>
<feature type="binding site" evidence="1">
    <location>
        <position position="75"/>
    </location>
    <ligand>
        <name>substrate</name>
    </ligand>
</feature>
<feature type="binding site" evidence="1">
    <location>
        <begin position="192"/>
        <end position="196"/>
    </location>
    <ligand>
        <name>ATP</name>
        <dbReference type="ChEBI" id="CHEBI:30616"/>
    </ligand>
</feature>
<feature type="binding site" evidence="1">
    <location>
        <begin position="266"/>
        <end position="268"/>
    </location>
    <ligand>
        <name>ATP</name>
        <dbReference type="ChEBI" id="CHEBI:30616"/>
    </ligand>
</feature>
<feature type="binding site" evidence="1">
    <location>
        <begin position="314"/>
        <end position="318"/>
    </location>
    <ligand>
        <name>ATP</name>
        <dbReference type="ChEBI" id="CHEBI:30616"/>
    </ligand>
</feature>
<feature type="binding site" evidence="1">
    <location>
        <position position="368"/>
    </location>
    <ligand>
        <name>Mg(2+)</name>
        <dbReference type="ChEBI" id="CHEBI:18420"/>
    </ligand>
</feature>
<feature type="site" description="Transition state stabilizer" evidence="1">
    <location>
        <position position="164"/>
    </location>
</feature>
<feature type="site" description="Transition state stabilizer" evidence="1">
    <location>
        <position position="225"/>
    </location>
</feature>